<reference key="1">
    <citation type="journal article" date="1998" name="DNA Res.">
        <title>Structural analysis of Arabidopsis thaliana chromosome 5. VI. Sequence features of the regions of 1,367,185 bp covered by 19 physically assigned P1 and TAC clones.</title>
        <authorList>
            <person name="Kotani H."/>
            <person name="Nakamura Y."/>
            <person name="Sato S."/>
            <person name="Asamizu E."/>
            <person name="Kaneko T."/>
            <person name="Miyajima N."/>
            <person name="Tabata S."/>
        </authorList>
    </citation>
    <scope>NUCLEOTIDE SEQUENCE [LARGE SCALE GENOMIC DNA]</scope>
    <source>
        <strain>cv. Columbia</strain>
    </source>
</reference>
<reference key="2">
    <citation type="journal article" date="2017" name="Plant J.">
        <title>Araport11: a complete reannotation of the Arabidopsis thaliana reference genome.</title>
        <authorList>
            <person name="Cheng C.Y."/>
            <person name="Krishnakumar V."/>
            <person name="Chan A.P."/>
            <person name="Thibaud-Nissen F."/>
            <person name="Schobel S."/>
            <person name="Town C.D."/>
        </authorList>
    </citation>
    <scope>GENOME REANNOTATION</scope>
    <source>
        <strain>cv. Columbia</strain>
    </source>
</reference>
<reference key="3">
    <citation type="journal article" date="2003" name="Science">
        <title>Empirical analysis of transcriptional activity in the Arabidopsis genome.</title>
        <authorList>
            <person name="Yamada K."/>
            <person name="Lim J."/>
            <person name="Dale J.M."/>
            <person name="Chen H."/>
            <person name="Shinn P."/>
            <person name="Palm C.J."/>
            <person name="Southwick A.M."/>
            <person name="Wu H.C."/>
            <person name="Kim C.J."/>
            <person name="Nguyen M."/>
            <person name="Pham P.K."/>
            <person name="Cheuk R.F."/>
            <person name="Karlin-Newmann G."/>
            <person name="Liu S.X."/>
            <person name="Lam B."/>
            <person name="Sakano H."/>
            <person name="Wu T."/>
            <person name="Yu G."/>
            <person name="Miranda M."/>
            <person name="Quach H.L."/>
            <person name="Tripp M."/>
            <person name="Chang C.H."/>
            <person name="Lee J.M."/>
            <person name="Toriumi M.J."/>
            <person name="Chan M.M."/>
            <person name="Tang C.C."/>
            <person name="Onodera C.S."/>
            <person name="Deng J.M."/>
            <person name="Akiyama K."/>
            <person name="Ansari Y."/>
            <person name="Arakawa T."/>
            <person name="Banh J."/>
            <person name="Banno F."/>
            <person name="Bowser L."/>
            <person name="Brooks S.Y."/>
            <person name="Carninci P."/>
            <person name="Chao Q."/>
            <person name="Choy N."/>
            <person name="Enju A."/>
            <person name="Goldsmith A.D."/>
            <person name="Gurjal M."/>
            <person name="Hansen N.F."/>
            <person name="Hayashizaki Y."/>
            <person name="Johnson-Hopson C."/>
            <person name="Hsuan V.W."/>
            <person name="Iida K."/>
            <person name="Karnes M."/>
            <person name="Khan S."/>
            <person name="Koesema E."/>
            <person name="Ishida J."/>
            <person name="Jiang P.X."/>
            <person name="Jones T."/>
            <person name="Kawai J."/>
            <person name="Kamiya A."/>
            <person name="Meyers C."/>
            <person name="Nakajima M."/>
            <person name="Narusaka M."/>
            <person name="Seki M."/>
            <person name="Sakurai T."/>
            <person name="Satou M."/>
            <person name="Tamse R."/>
            <person name="Vaysberg M."/>
            <person name="Wallender E.K."/>
            <person name="Wong C."/>
            <person name="Yamamura Y."/>
            <person name="Yuan S."/>
            <person name="Shinozaki K."/>
            <person name="Davis R.W."/>
            <person name="Theologis A."/>
            <person name="Ecker J.R."/>
        </authorList>
    </citation>
    <scope>NUCLEOTIDE SEQUENCE [LARGE SCALE MRNA]</scope>
    <source>
        <strain>cv. Columbia</strain>
    </source>
</reference>
<reference key="4">
    <citation type="submission" date="2002-03" db="EMBL/GenBank/DDBJ databases">
        <title>Full-length cDNA from Arabidopsis thaliana.</title>
        <authorList>
            <person name="Brover V.V."/>
            <person name="Troukhan M.E."/>
            <person name="Alexandrov N.A."/>
            <person name="Lu Y.-P."/>
            <person name="Flavell R.B."/>
            <person name="Feldmann K.A."/>
        </authorList>
    </citation>
    <scope>NUCLEOTIDE SEQUENCE [LARGE SCALE MRNA]</scope>
</reference>
<reference key="5">
    <citation type="journal article" date="2003" name="Plant Physiol.">
        <title>Analysis of the small GTPase gene superfamily of Arabidopsis.</title>
        <authorList>
            <person name="Vernoud V."/>
            <person name="Horton A.C."/>
            <person name="Yang Z."/>
            <person name="Nielsen E."/>
        </authorList>
    </citation>
    <scope>GENE FAMILY</scope>
    <scope>NOMENCLATURE</scope>
</reference>
<reference key="6">
    <citation type="journal article" date="2005" name="J. Exp. Bot.">
        <title>Genes encoding ADP-ribosylation factors in Arabidopsis thaliana; genome analysis and antisense suppression.</title>
        <authorList>
            <person name="Gebbie L.K."/>
            <person name="Burn J.E."/>
            <person name="Hocart C.H."/>
            <person name="Williamson R.E."/>
        </authorList>
    </citation>
    <scope>GENE FAMILY</scope>
</reference>
<reference key="7">
    <citation type="journal article" date="2011" name="PLoS Pathog.">
        <title>A host small GTP-binding protein ARL8 plays crucial roles in tobamovirus RNA replication.</title>
        <authorList>
            <person name="Nishikiori M."/>
            <person name="Mori M."/>
            <person name="Dohi K."/>
            <person name="Okamura H."/>
            <person name="Katoh E."/>
            <person name="Naito S."/>
            <person name="Meshi T."/>
            <person name="Ishikawa M."/>
        </authorList>
    </citation>
    <scope>FUNCTION (MICROBIAL INFECTION)</scope>
    <scope>DISRUPTION PHENOTYPE</scope>
    <scope>GENE FAMILY</scope>
    <scope>NOMENCLATURE</scope>
    <source>
        <strain>cv. Columbia</strain>
    </source>
</reference>
<feature type="chain" id="PRO_0000438004" description="ADP-ribosylation factor-like protein 8b">
    <location>
        <begin position="1"/>
        <end position="184"/>
    </location>
</feature>
<feature type="intramembrane region" description="Note=Mediates targeting to membranes" evidence="2">
    <location>
        <begin position="1"/>
        <end position="18"/>
    </location>
</feature>
<feature type="binding site" evidence="1">
    <location>
        <begin position="29"/>
        <end position="34"/>
    </location>
    <ligand>
        <name>GTP</name>
        <dbReference type="ChEBI" id="CHEBI:37565"/>
    </ligand>
</feature>
<feature type="binding site" evidence="1">
    <location>
        <begin position="48"/>
        <end position="51"/>
    </location>
    <ligand>
        <name>GTP</name>
        <dbReference type="ChEBI" id="CHEBI:37565"/>
    </ligand>
</feature>
<feature type="binding site" evidence="1">
    <location>
        <begin position="70"/>
        <end position="74"/>
    </location>
    <ligand>
        <name>GTP</name>
        <dbReference type="ChEBI" id="CHEBI:37565"/>
    </ligand>
</feature>
<feature type="binding site" evidence="1">
    <location>
        <begin position="129"/>
        <end position="132"/>
    </location>
    <ligand>
        <name>GTP</name>
        <dbReference type="ChEBI" id="CHEBI:37565"/>
    </ligand>
</feature>
<sequence length="184" mass="20404">MGLWDALLNWLRSLFFKQEMELSLIGLQNAGKTSLVNVVATGGYSEDMIPTVGFNMRKVTKGSVTIKLWDLGGQPRFRSMWERYCRSVSAIVYVVDAADPDNLSVSKSELHDLLSKTSLNGIPLLVLGNKIDKPGALSKEALTDEMGLKSLTDREVCCFMISCKNSTNIDQVIDWLVKHSKSSN</sequence>
<dbReference type="EMBL" id="AB013390">
    <property type="protein sequence ID" value="BAB08464.1"/>
    <property type="status" value="ALT_SEQ"/>
    <property type="molecule type" value="Genomic_DNA"/>
</dbReference>
<dbReference type="EMBL" id="CP002688">
    <property type="protein sequence ID" value="AED98360.1"/>
    <property type="molecule type" value="Genomic_DNA"/>
</dbReference>
<dbReference type="EMBL" id="AY054524">
    <property type="protein sequence ID" value="AAK96715.1"/>
    <property type="molecule type" value="mRNA"/>
</dbReference>
<dbReference type="EMBL" id="AY064616">
    <property type="protein sequence ID" value="AAL47331.1"/>
    <property type="molecule type" value="mRNA"/>
</dbReference>
<dbReference type="EMBL" id="AY087487">
    <property type="protein sequence ID" value="AAM65030.1"/>
    <property type="molecule type" value="mRNA"/>
</dbReference>
<dbReference type="RefSeq" id="NP_569051.1">
    <property type="nucleotide sequence ID" value="NM_126156.5"/>
</dbReference>
<dbReference type="SMR" id="Q93Y31"/>
<dbReference type="FunCoup" id="Q93Y31">
    <property type="interactions" value="3487"/>
</dbReference>
<dbReference type="STRING" id="3702.Q93Y31"/>
<dbReference type="PaxDb" id="3702-AT5G67560.1"/>
<dbReference type="ProteomicsDB" id="246599"/>
<dbReference type="EnsemblPlants" id="AT5G67560.1">
    <property type="protein sequence ID" value="AT5G67560.1"/>
    <property type="gene ID" value="AT5G67560"/>
</dbReference>
<dbReference type="GeneID" id="836892"/>
<dbReference type="Gramene" id="AT5G67560.1">
    <property type="protein sequence ID" value="AT5G67560.1"/>
    <property type="gene ID" value="AT5G67560"/>
</dbReference>
<dbReference type="KEGG" id="ath:AT5G67560"/>
<dbReference type="Araport" id="AT5G67560"/>
<dbReference type="TAIR" id="AT5G67560">
    <property type="gene designation" value="ARLA1D"/>
</dbReference>
<dbReference type="eggNOG" id="KOG0075">
    <property type="taxonomic scope" value="Eukaryota"/>
</dbReference>
<dbReference type="HOGENOM" id="CLU_040729_10_1_1"/>
<dbReference type="InParanoid" id="Q93Y31"/>
<dbReference type="OMA" id="REICCYL"/>
<dbReference type="OrthoDB" id="2011769at2759"/>
<dbReference type="PhylomeDB" id="Q93Y31"/>
<dbReference type="CD-CODE" id="4299E36E">
    <property type="entry name" value="Nucleolus"/>
</dbReference>
<dbReference type="PRO" id="PR:Q93Y31"/>
<dbReference type="Proteomes" id="UP000006548">
    <property type="component" value="Chromosome 5"/>
</dbReference>
<dbReference type="ExpressionAtlas" id="Q93Y31">
    <property type="expression patterns" value="baseline and differential"/>
</dbReference>
<dbReference type="GO" id="GO:0031902">
    <property type="term" value="C:late endosome membrane"/>
    <property type="evidence" value="ECO:0007669"/>
    <property type="project" value="UniProtKB-SubCell"/>
</dbReference>
<dbReference type="GO" id="GO:0005765">
    <property type="term" value="C:lysosomal membrane"/>
    <property type="evidence" value="ECO:0007669"/>
    <property type="project" value="UniProtKB-SubCell"/>
</dbReference>
<dbReference type="GO" id="GO:0000325">
    <property type="term" value="C:plant-type vacuole"/>
    <property type="evidence" value="ECO:0007005"/>
    <property type="project" value="TAIR"/>
</dbReference>
<dbReference type="GO" id="GO:0009506">
    <property type="term" value="C:plasmodesma"/>
    <property type="evidence" value="ECO:0007005"/>
    <property type="project" value="TAIR"/>
</dbReference>
<dbReference type="GO" id="GO:0005819">
    <property type="term" value="C:spindle"/>
    <property type="evidence" value="ECO:0007669"/>
    <property type="project" value="UniProtKB-SubCell"/>
</dbReference>
<dbReference type="GO" id="GO:0005525">
    <property type="term" value="F:GTP binding"/>
    <property type="evidence" value="ECO:0000250"/>
    <property type="project" value="TAIR"/>
</dbReference>
<dbReference type="GO" id="GO:0003924">
    <property type="term" value="F:GTPase activity"/>
    <property type="evidence" value="ECO:0007669"/>
    <property type="project" value="InterPro"/>
</dbReference>
<dbReference type="GO" id="GO:0051301">
    <property type="term" value="P:cell division"/>
    <property type="evidence" value="ECO:0007669"/>
    <property type="project" value="UniProtKB-KW"/>
</dbReference>
<dbReference type="GO" id="GO:0007059">
    <property type="term" value="P:chromosome segregation"/>
    <property type="evidence" value="ECO:0007669"/>
    <property type="project" value="UniProtKB-KW"/>
</dbReference>
<dbReference type="GO" id="GO:0015031">
    <property type="term" value="P:protein transport"/>
    <property type="evidence" value="ECO:0007669"/>
    <property type="project" value="InterPro"/>
</dbReference>
<dbReference type="CDD" id="cd04159">
    <property type="entry name" value="Arl10_like"/>
    <property type="match status" value="1"/>
</dbReference>
<dbReference type="FunFam" id="3.40.50.300:FF:000441">
    <property type="entry name" value="ADP-ribosylation factor-like protein 8a"/>
    <property type="match status" value="1"/>
</dbReference>
<dbReference type="Gene3D" id="3.40.50.300">
    <property type="entry name" value="P-loop containing nucleotide triphosphate hydrolases"/>
    <property type="match status" value="1"/>
</dbReference>
<dbReference type="InterPro" id="IPR044154">
    <property type="entry name" value="Arl8a/8b"/>
</dbReference>
<dbReference type="InterPro" id="IPR027417">
    <property type="entry name" value="P-loop_NTPase"/>
</dbReference>
<dbReference type="InterPro" id="IPR005225">
    <property type="entry name" value="Small_GTP-bd"/>
</dbReference>
<dbReference type="InterPro" id="IPR006689">
    <property type="entry name" value="Small_GTPase_ARF/SAR"/>
</dbReference>
<dbReference type="NCBIfam" id="TIGR00231">
    <property type="entry name" value="small_GTP"/>
    <property type="match status" value="1"/>
</dbReference>
<dbReference type="PANTHER" id="PTHR45732">
    <property type="entry name" value="ADP-RIBOSYLATION FACTOR-LIKE PROTEIN 8"/>
    <property type="match status" value="1"/>
</dbReference>
<dbReference type="PANTHER" id="PTHR45732:SF15">
    <property type="entry name" value="ADP-RIBOSYLATION FACTOR-LIKE PROTEIN 8B"/>
    <property type="match status" value="1"/>
</dbReference>
<dbReference type="Pfam" id="PF00025">
    <property type="entry name" value="Arf"/>
    <property type="match status" value="1"/>
</dbReference>
<dbReference type="PRINTS" id="PR00328">
    <property type="entry name" value="SAR1GTPBP"/>
</dbReference>
<dbReference type="SMART" id="SM00177">
    <property type="entry name" value="ARF"/>
    <property type="match status" value="1"/>
</dbReference>
<dbReference type="SMART" id="SM00175">
    <property type="entry name" value="RAB"/>
    <property type="match status" value="1"/>
</dbReference>
<dbReference type="SMART" id="SM00178">
    <property type="entry name" value="SAR"/>
    <property type="match status" value="1"/>
</dbReference>
<dbReference type="SUPFAM" id="SSF52540">
    <property type="entry name" value="P-loop containing nucleoside triphosphate hydrolases"/>
    <property type="match status" value="1"/>
</dbReference>
<dbReference type="PROSITE" id="PS51417">
    <property type="entry name" value="ARF"/>
    <property type="match status" value="1"/>
</dbReference>
<keyword id="KW-0131">Cell cycle</keyword>
<keyword id="KW-0132">Cell division</keyword>
<keyword id="KW-0159">Chromosome partition</keyword>
<keyword id="KW-0963">Cytoplasm</keyword>
<keyword id="KW-0206">Cytoskeleton</keyword>
<keyword id="KW-0967">Endosome</keyword>
<keyword id="KW-0342">GTP-binding</keyword>
<keyword id="KW-0458">Lysosome</keyword>
<keyword id="KW-0472">Membrane</keyword>
<keyword id="KW-0498">Mitosis</keyword>
<keyword id="KW-0547">Nucleotide-binding</keyword>
<keyword id="KW-1185">Reference proteome</keyword>
<organism>
    <name type="scientific">Arabidopsis thaliana</name>
    <name type="common">Mouse-ear cress</name>
    <dbReference type="NCBI Taxonomy" id="3702"/>
    <lineage>
        <taxon>Eukaryota</taxon>
        <taxon>Viridiplantae</taxon>
        <taxon>Streptophyta</taxon>
        <taxon>Embryophyta</taxon>
        <taxon>Tracheophyta</taxon>
        <taxon>Spermatophyta</taxon>
        <taxon>Magnoliopsida</taxon>
        <taxon>eudicotyledons</taxon>
        <taxon>Gunneridae</taxon>
        <taxon>Pentapetalae</taxon>
        <taxon>rosids</taxon>
        <taxon>malvids</taxon>
        <taxon>Brassicales</taxon>
        <taxon>Brassicaceae</taxon>
        <taxon>Camelineae</taxon>
        <taxon>Arabidopsis</taxon>
    </lineage>
</organism>
<evidence type="ECO:0000250" key="1">
    <source>
        <dbReference type="UniProtKB" id="P62330"/>
    </source>
</evidence>
<evidence type="ECO:0000250" key="2">
    <source>
        <dbReference type="UniProtKB" id="Q9NVJ2"/>
    </source>
</evidence>
<evidence type="ECO:0000269" key="3">
    <source>
    </source>
</evidence>
<evidence type="ECO:0000303" key="4">
    <source>
    </source>
</evidence>
<evidence type="ECO:0000303" key="5">
    <source>
    </source>
</evidence>
<evidence type="ECO:0000305" key="6"/>
<evidence type="ECO:0000312" key="7">
    <source>
        <dbReference type="Araport" id="AT5G67560"/>
    </source>
</evidence>
<evidence type="ECO:0000312" key="8">
    <source>
        <dbReference type="EMBL" id="BAB08464.1"/>
    </source>
</evidence>
<protein>
    <recommendedName>
        <fullName evidence="5">ADP-ribosylation factor-like protein 8b</fullName>
        <shortName evidence="5">AtARL8b</shortName>
    </recommendedName>
    <alternativeName>
        <fullName evidence="4">ADP-ribosylation factor-like A1D</fullName>
        <shortName evidence="4">AtARLA1D</shortName>
    </alternativeName>
</protein>
<accession>Q93Y31</accession>
<accession>Q9FJW7</accession>
<proteinExistence type="evidence at transcript level"/>
<gene>
    <name evidence="5" type="primary">ARL8B</name>
    <name evidence="4" type="synonym">ARLA1D</name>
    <name evidence="7" type="ordered locus">At5g67560</name>
    <name evidence="8" type="ORF">K9I9.13</name>
</gene>
<name>ARL8B_ARATH</name>
<comment type="function">
    <text evidence="2">May play a role in lysosome motility. May play a role in chromosome segregation.</text>
</comment>
<comment type="function">
    <text evidence="3">(Microbial infection) Component of tomato mosaic virus (ToMV) RNA replication complexes. Required for tobamovirus multiplication, especially for efficient negative-strand RNA synthesis and viral RNA capping.</text>
</comment>
<comment type="subunit">
    <text evidence="2">Interacts with tubulin.</text>
</comment>
<comment type="subcellular location">
    <subcellularLocation>
        <location evidence="2">Late endosome membrane</location>
    </subcellularLocation>
    <subcellularLocation>
        <location evidence="2">Lysosome membrane</location>
    </subcellularLocation>
    <subcellularLocation>
        <location evidence="2">Cytoplasm</location>
        <location evidence="2">Cytoskeleton</location>
        <location evidence="2">Spindle</location>
    </subcellularLocation>
    <text evidence="2">Localizes with microtubules at the spindle mid-zone during mitosis.</text>
</comment>
<comment type="disruption phenotype">
    <text evidence="3">In double and triple mutants arl8a-1 arl8b-1 and arl8a-1 arl8b-1 arl8c-1, impaired multiplication of tomato mosaic virus (ToMV).</text>
</comment>
<comment type="similarity">
    <text evidence="6">Belongs to the small GTPase superfamily. Arf family.</text>
</comment>
<comment type="sequence caution" evidence="6">
    <conflict type="erroneous gene model prediction">
        <sequence resource="EMBL-CDS" id="BAB08464"/>
    </conflict>
</comment>